<proteinExistence type="inferred from homology"/>
<organism>
    <name type="scientific">Barbarea verna</name>
    <name type="common">Land cress</name>
    <name type="synonym">Erysimum vernum</name>
    <dbReference type="NCBI Taxonomy" id="50458"/>
    <lineage>
        <taxon>Eukaryota</taxon>
        <taxon>Viridiplantae</taxon>
        <taxon>Streptophyta</taxon>
        <taxon>Embryophyta</taxon>
        <taxon>Tracheophyta</taxon>
        <taxon>Spermatophyta</taxon>
        <taxon>Magnoliopsida</taxon>
        <taxon>eudicotyledons</taxon>
        <taxon>Gunneridae</taxon>
        <taxon>Pentapetalae</taxon>
        <taxon>rosids</taxon>
        <taxon>malvids</taxon>
        <taxon>Brassicales</taxon>
        <taxon>Brassicaceae</taxon>
        <taxon>Cardamineae</taxon>
        <taxon>Barbarea</taxon>
    </lineage>
</organism>
<reference key="1">
    <citation type="submission" date="2007-03" db="EMBL/GenBank/DDBJ databases">
        <title>Sequencing analysis of Barbarea verna chloroplast DNA.</title>
        <authorList>
            <person name="Hosouchi T."/>
            <person name="Tsuruoka H."/>
            <person name="Kotani H."/>
        </authorList>
    </citation>
    <scope>NUCLEOTIDE SEQUENCE [LARGE SCALE GENOMIC DNA]</scope>
</reference>
<evidence type="ECO:0000255" key="1">
    <source>
        <dbReference type="HAMAP-Rule" id="MF_00382"/>
    </source>
</evidence>
<evidence type="ECO:0000305" key="2"/>
<dbReference type="EMBL" id="AP009370">
    <property type="protein sequence ID" value="BAF50133.1"/>
    <property type="molecule type" value="Genomic_DNA"/>
</dbReference>
<dbReference type="RefSeq" id="YP_001123309.1">
    <property type="nucleotide sequence ID" value="NC_009269.1"/>
</dbReference>
<dbReference type="SMR" id="A4QKC8"/>
<dbReference type="GeneID" id="4961882"/>
<dbReference type="GO" id="GO:0009507">
    <property type="term" value="C:chloroplast"/>
    <property type="evidence" value="ECO:0007669"/>
    <property type="project" value="UniProtKB-SubCell"/>
</dbReference>
<dbReference type="GO" id="GO:1990904">
    <property type="term" value="C:ribonucleoprotein complex"/>
    <property type="evidence" value="ECO:0007669"/>
    <property type="project" value="UniProtKB-KW"/>
</dbReference>
<dbReference type="GO" id="GO:0005840">
    <property type="term" value="C:ribosome"/>
    <property type="evidence" value="ECO:0007669"/>
    <property type="project" value="UniProtKB-KW"/>
</dbReference>
<dbReference type="GO" id="GO:0019843">
    <property type="term" value="F:rRNA binding"/>
    <property type="evidence" value="ECO:0007669"/>
    <property type="project" value="UniProtKB-UniRule"/>
</dbReference>
<dbReference type="GO" id="GO:0003735">
    <property type="term" value="F:structural constituent of ribosome"/>
    <property type="evidence" value="ECO:0007669"/>
    <property type="project" value="InterPro"/>
</dbReference>
<dbReference type="GO" id="GO:0000027">
    <property type="term" value="P:ribosomal large subunit assembly"/>
    <property type="evidence" value="ECO:0007669"/>
    <property type="project" value="UniProtKB-UniRule"/>
</dbReference>
<dbReference type="GO" id="GO:0006412">
    <property type="term" value="P:translation"/>
    <property type="evidence" value="ECO:0007669"/>
    <property type="project" value="InterPro"/>
</dbReference>
<dbReference type="CDD" id="cd07026">
    <property type="entry name" value="Ribosomal_L20"/>
    <property type="match status" value="1"/>
</dbReference>
<dbReference type="FunFam" id="1.10.1900.20:FF:000001">
    <property type="entry name" value="50S ribosomal protein L20"/>
    <property type="match status" value="1"/>
</dbReference>
<dbReference type="Gene3D" id="6.10.160.10">
    <property type="match status" value="1"/>
</dbReference>
<dbReference type="Gene3D" id="1.10.1900.20">
    <property type="entry name" value="Ribosomal protein L20"/>
    <property type="match status" value="1"/>
</dbReference>
<dbReference type="HAMAP" id="MF_00382">
    <property type="entry name" value="Ribosomal_bL20"/>
    <property type="match status" value="1"/>
</dbReference>
<dbReference type="InterPro" id="IPR005813">
    <property type="entry name" value="Ribosomal_bL20"/>
</dbReference>
<dbReference type="InterPro" id="IPR049946">
    <property type="entry name" value="RIBOSOMAL_L20_CS"/>
</dbReference>
<dbReference type="InterPro" id="IPR035566">
    <property type="entry name" value="Ribosomal_protein_bL20_C"/>
</dbReference>
<dbReference type="NCBIfam" id="TIGR01032">
    <property type="entry name" value="rplT_bact"/>
    <property type="match status" value="1"/>
</dbReference>
<dbReference type="PANTHER" id="PTHR10986">
    <property type="entry name" value="39S RIBOSOMAL PROTEIN L20"/>
    <property type="match status" value="1"/>
</dbReference>
<dbReference type="Pfam" id="PF00453">
    <property type="entry name" value="Ribosomal_L20"/>
    <property type="match status" value="1"/>
</dbReference>
<dbReference type="PRINTS" id="PR00062">
    <property type="entry name" value="RIBOSOMALL20"/>
</dbReference>
<dbReference type="SUPFAM" id="SSF74731">
    <property type="entry name" value="Ribosomal protein L20"/>
    <property type="match status" value="1"/>
</dbReference>
<dbReference type="PROSITE" id="PS00937">
    <property type="entry name" value="RIBOSOMAL_L20"/>
    <property type="match status" value="1"/>
</dbReference>
<comment type="function">
    <text evidence="1">Binds directly to 23S ribosomal RNA and is necessary for the in vitro assembly process of the 50S ribosomal subunit. It is not involved in the protein synthesizing functions of that subunit.</text>
</comment>
<comment type="subcellular location">
    <subcellularLocation>
        <location>Plastid</location>
        <location>Chloroplast</location>
    </subcellularLocation>
</comment>
<comment type="similarity">
    <text evidence="1">Belongs to the bacterial ribosomal protein bL20 family.</text>
</comment>
<geneLocation type="chloroplast"/>
<protein>
    <recommendedName>
        <fullName evidence="1">Large ribosomal subunit protein bL20c</fullName>
    </recommendedName>
    <alternativeName>
        <fullName evidence="2">50S ribosomal protein L20, chloroplastic</fullName>
    </alternativeName>
</protein>
<gene>
    <name evidence="1" type="primary">rpl20</name>
</gene>
<name>RK20_BARVE</name>
<sequence>MTRIKRGYIARRRRTKLRLFASSFRGAHSRLTRTMTQQRIRALVSAHRDRGKRKRDFRRLWITRINAVIHEMGVFYSYNQFIHNLYKKQLLLNRKILAQIALLNRSCLYTISNEIKE</sequence>
<accession>A4QKC8</accession>
<feature type="chain" id="PRO_0000355488" description="Large ribosomal subunit protein bL20c">
    <location>
        <begin position="1"/>
        <end position="117"/>
    </location>
</feature>
<keyword id="KW-0150">Chloroplast</keyword>
<keyword id="KW-0934">Plastid</keyword>
<keyword id="KW-0687">Ribonucleoprotein</keyword>
<keyword id="KW-0689">Ribosomal protein</keyword>
<keyword id="KW-0694">RNA-binding</keyword>
<keyword id="KW-0699">rRNA-binding</keyword>